<proteinExistence type="inferred from homology"/>
<accession>C4K226</accession>
<keyword id="KW-0066">ATP synthesis</keyword>
<keyword id="KW-0997">Cell inner membrane</keyword>
<keyword id="KW-1003">Cell membrane</keyword>
<keyword id="KW-0139">CF(1)</keyword>
<keyword id="KW-0375">Hydrogen ion transport</keyword>
<keyword id="KW-0406">Ion transport</keyword>
<keyword id="KW-0472">Membrane</keyword>
<keyword id="KW-0813">Transport</keyword>
<reference key="1">
    <citation type="journal article" date="2009" name="PLoS ONE">
        <title>Genome sequence of the endosymbiont Rickettsia peacockii and comparison with virulent Rickettsia rickettsii: identification of virulence factors.</title>
        <authorList>
            <person name="Felsheim R.F."/>
            <person name="Kurtti T.J."/>
            <person name="Munderloh U.G."/>
        </authorList>
    </citation>
    <scope>NUCLEOTIDE SEQUENCE [LARGE SCALE GENOMIC DNA]</scope>
    <source>
        <strain>Rustic</strain>
    </source>
</reference>
<sequence length="112" mass="12103">MNATILVKIITPLSIALEKQAKMVTMSGEEGMFGVLPSHVPMIVSLKAGLVQVYIDDMHKSENTYLISGGVTEVTANYINIATDTAINVTNLSEAEIATKLLDLQKTLSDQH</sequence>
<dbReference type="EMBL" id="CP001227">
    <property type="protein sequence ID" value="ACR47624.1"/>
    <property type="molecule type" value="Genomic_DNA"/>
</dbReference>
<dbReference type="RefSeq" id="WP_012736836.1">
    <property type="nucleotide sequence ID" value="NC_012730.1"/>
</dbReference>
<dbReference type="SMR" id="C4K226"/>
<dbReference type="KEGG" id="rpk:RPR_04915"/>
<dbReference type="HOGENOM" id="CLU_084338_2_1_5"/>
<dbReference type="Proteomes" id="UP000005015">
    <property type="component" value="Chromosome"/>
</dbReference>
<dbReference type="GO" id="GO:0005886">
    <property type="term" value="C:plasma membrane"/>
    <property type="evidence" value="ECO:0007669"/>
    <property type="project" value="UniProtKB-SubCell"/>
</dbReference>
<dbReference type="GO" id="GO:0045259">
    <property type="term" value="C:proton-transporting ATP synthase complex"/>
    <property type="evidence" value="ECO:0007669"/>
    <property type="project" value="UniProtKB-KW"/>
</dbReference>
<dbReference type="GO" id="GO:0005524">
    <property type="term" value="F:ATP binding"/>
    <property type="evidence" value="ECO:0007669"/>
    <property type="project" value="UniProtKB-UniRule"/>
</dbReference>
<dbReference type="GO" id="GO:0046933">
    <property type="term" value="F:proton-transporting ATP synthase activity, rotational mechanism"/>
    <property type="evidence" value="ECO:0007669"/>
    <property type="project" value="UniProtKB-UniRule"/>
</dbReference>
<dbReference type="CDD" id="cd12152">
    <property type="entry name" value="F1-ATPase_delta"/>
    <property type="match status" value="1"/>
</dbReference>
<dbReference type="Gene3D" id="2.60.15.10">
    <property type="entry name" value="F0F1 ATP synthase delta/epsilon subunit, N-terminal"/>
    <property type="match status" value="1"/>
</dbReference>
<dbReference type="HAMAP" id="MF_00530">
    <property type="entry name" value="ATP_synth_epsil_bac"/>
    <property type="match status" value="1"/>
</dbReference>
<dbReference type="InterPro" id="IPR001469">
    <property type="entry name" value="ATP_synth_F1_dsu/esu"/>
</dbReference>
<dbReference type="InterPro" id="IPR020546">
    <property type="entry name" value="ATP_synth_F1_dsu/esu_N"/>
</dbReference>
<dbReference type="InterPro" id="IPR036771">
    <property type="entry name" value="ATPsynth_dsu/esu_N"/>
</dbReference>
<dbReference type="NCBIfam" id="TIGR01216">
    <property type="entry name" value="ATP_synt_epsi"/>
    <property type="match status" value="1"/>
</dbReference>
<dbReference type="NCBIfam" id="NF002403">
    <property type="entry name" value="PRK01474.1"/>
    <property type="match status" value="1"/>
</dbReference>
<dbReference type="PANTHER" id="PTHR13822">
    <property type="entry name" value="ATP SYNTHASE DELTA/EPSILON CHAIN"/>
    <property type="match status" value="1"/>
</dbReference>
<dbReference type="PANTHER" id="PTHR13822:SF10">
    <property type="entry name" value="ATP SYNTHASE EPSILON CHAIN, CHLOROPLASTIC"/>
    <property type="match status" value="1"/>
</dbReference>
<dbReference type="Pfam" id="PF02823">
    <property type="entry name" value="ATP-synt_DE_N"/>
    <property type="match status" value="1"/>
</dbReference>
<dbReference type="SUPFAM" id="SSF51344">
    <property type="entry name" value="Epsilon subunit of F1F0-ATP synthase N-terminal domain"/>
    <property type="match status" value="1"/>
</dbReference>
<evidence type="ECO:0000255" key="1">
    <source>
        <dbReference type="HAMAP-Rule" id="MF_00530"/>
    </source>
</evidence>
<organism>
    <name type="scientific">Rickettsia peacockii (strain Rustic)</name>
    <dbReference type="NCBI Taxonomy" id="562019"/>
    <lineage>
        <taxon>Bacteria</taxon>
        <taxon>Pseudomonadati</taxon>
        <taxon>Pseudomonadota</taxon>
        <taxon>Alphaproteobacteria</taxon>
        <taxon>Rickettsiales</taxon>
        <taxon>Rickettsiaceae</taxon>
        <taxon>Rickettsieae</taxon>
        <taxon>Rickettsia</taxon>
        <taxon>spotted fever group</taxon>
    </lineage>
</organism>
<name>ATPE_RICPU</name>
<gene>
    <name evidence="1" type="primary">atpC</name>
    <name type="ordered locus">RPR_04915</name>
</gene>
<comment type="function">
    <text evidence="1">Produces ATP from ADP in the presence of a proton gradient across the membrane.</text>
</comment>
<comment type="subunit">
    <text evidence="1">F-type ATPases have 2 components, CF(1) - the catalytic core - and CF(0) - the membrane proton channel. CF(1) has five subunits: alpha(3), beta(3), gamma(1), delta(1), epsilon(1). CF(0) has three main subunits: a, b and c.</text>
</comment>
<comment type="subcellular location">
    <subcellularLocation>
        <location evidence="1">Cell inner membrane</location>
        <topology evidence="1">Peripheral membrane protein</topology>
    </subcellularLocation>
</comment>
<comment type="similarity">
    <text evidence="1">Belongs to the ATPase epsilon chain family.</text>
</comment>
<protein>
    <recommendedName>
        <fullName evidence="1">ATP synthase epsilon chain</fullName>
    </recommendedName>
    <alternativeName>
        <fullName evidence="1">ATP synthase F1 sector epsilon subunit</fullName>
    </alternativeName>
    <alternativeName>
        <fullName evidence="1">F-ATPase epsilon subunit</fullName>
    </alternativeName>
</protein>
<feature type="chain" id="PRO_1000211791" description="ATP synthase epsilon chain">
    <location>
        <begin position="1"/>
        <end position="112"/>
    </location>
</feature>